<protein>
    <recommendedName>
        <fullName evidence="1">3-hydroxyacyl-[acyl-carrier-protein] dehydratase FabZ</fullName>
        <ecNumber evidence="1">4.2.1.59</ecNumber>
    </recommendedName>
    <alternativeName>
        <fullName evidence="1">(3R)-hydroxymyristoyl-[acyl-carrier-protein] dehydratase</fullName>
        <shortName evidence="1">(3R)-hydroxymyristoyl-ACP dehydrase</shortName>
    </alternativeName>
    <alternativeName>
        <fullName evidence="1">Beta-hydroxyacyl-ACP dehydratase</fullName>
    </alternativeName>
</protein>
<proteinExistence type="evidence at protein level"/>
<dbReference type="EC" id="4.2.1.59" evidence="1"/>
<dbReference type="EMBL" id="AJ749949">
    <property type="protein sequence ID" value="CAG46203.1"/>
    <property type="molecule type" value="Genomic_DNA"/>
</dbReference>
<dbReference type="RefSeq" id="WP_003014877.1">
    <property type="nucleotide sequence ID" value="NZ_CP010290.1"/>
</dbReference>
<dbReference type="RefSeq" id="YP_170492.1">
    <property type="nucleotide sequence ID" value="NC_006570.2"/>
</dbReference>
<dbReference type="PDB" id="5BUY">
    <property type="method" value="X-ray"/>
    <property type="resolution" value="2.55 A"/>
    <property type="chains" value="A/B/C/D/E/F=1-163"/>
</dbReference>
<dbReference type="PDBsum" id="5BUY"/>
<dbReference type="SMR" id="Q5NEQ0"/>
<dbReference type="STRING" id="177416.FTT_1570c"/>
<dbReference type="DNASU" id="3191868"/>
<dbReference type="EnsemblBacteria" id="CAG46203">
    <property type="protein sequence ID" value="CAG46203"/>
    <property type="gene ID" value="FTT_1570c"/>
</dbReference>
<dbReference type="GeneID" id="75264783"/>
<dbReference type="KEGG" id="ftu:FTT_1570c"/>
<dbReference type="eggNOG" id="COG0764">
    <property type="taxonomic scope" value="Bacteria"/>
</dbReference>
<dbReference type="OrthoDB" id="9772788at2"/>
<dbReference type="Proteomes" id="UP000001174">
    <property type="component" value="Chromosome"/>
</dbReference>
<dbReference type="GO" id="GO:0005737">
    <property type="term" value="C:cytoplasm"/>
    <property type="evidence" value="ECO:0007669"/>
    <property type="project" value="UniProtKB-SubCell"/>
</dbReference>
<dbReference type="GO" id="GO:0016020">
    <property type="term" value="C:membrane"/>
    <property type="evidence" value="ECO:0007669"/>
    <property type="project" value="GOC"/>
</dbReference>
<dbReference type="GO" id="GO:0019171">
    <property type="term" value="F:(3R)-hydroxyacyl-[acyl-carrier-protein] dehydratase activity"/>
    <property type="evidence" value="ECO:0007669"/>
    <property type="project" value="UniProtKB-EC"/>
</dbReference>
<dbReference type="GO" id="GO:0006633">
    <property type="term" value="P:fatty acid biosynthetic process"/>
    <property type="evidence" value="ECO:0007669"/>
    <property type="project" value="UniProtKB-UniRule"/>
</dbReference>
<dbReference type="GO" id="GO:0009245">
    <property type="term" value="P:lipid A biosynthetic process"/>
    <property type="evidence" value="ECO:0007669"/>
    <property type="project" value="UniProtKB-UniRule"/>
</dbReference>
<dbReference type="CDD" id="cd01288">
    <property type="entry name" value="FabZ"/>
    <property type="match status" value="1"/>
</dbReference>
<dbReference type="FunFam" id="3.10.129.10:FF:000001">
    <property type="entry name" value="3-hydroxyacyl-[acyl-carrier-protein] dehydratase FabZ"/>
    <property type="match status" value="1"/>
</dbReference>
<dbReference type="Gene3D" id="3.10.129.10">
    <property type="entry name" value="Hotdog Thioesterase"/>
    <property type="match status" value="1"/>
</dbReference>
<dbReference type="HAMAP" id="MF_00406">
    <property type="entry name" value="FabZ"/>
    <property type="match status" value="1"/>
</dbReference>
<dbReference type="InterPro" id="IPR013114">
    <property type="entry name" value="FabA_FabZ"/>
</dbReference>
<dbReference type="InterPro" id="IPR010084">
    <property type="entry name" value="FabZ"/>
</dbReference>
<dbReference type="InterPro" id="IPR029069">
    <property type="entry name" value="HotDog_dom_sf"/>
</dbReference>
<dbReference type="NCBIfam" id="TIGR01750">
    <property type="entry name" value="fabZ"/>
    <property type="match status" value="1"/>
</dbReference>
<dbReference type="NCBIfam" id="NF000582">
    <property type="entry name" value="PRK00006.1"/>
    <property type="match status" value="1"/>
</dbReference>
<dbReference type="PANTHER" id="PTHR30272">
    <property type="entry name" value="3-HYDROXYACYL-[ACYL-CARRIER-PROTEIN] DEHYDRATASE"/>
    <property type="match status" value="1"/>
</dbReference>
<dbReference type="PANTHER" id="PTHR30272:SF1">
    <property type="entry name" value="3-HYDROXYACYL-[ACYL-CARRIER-PROTEIN] DEHYDRATASE"/>
    <property type="match status" value="1"/>
</dbReference>
<dbReference type="Pfam" id="PF07977">
    <property type="entry name" value="FabA"/>
    <property type="match status" value="1"/>
</dbReference>
<dbReference type="SUPFAM" id="SSF54637">
    <property type="entry name" value="Thioesterase/thiol ester dehydrase-isomerase"/>
    <property type="match status" value="1"/>
</dbReference>
<reference key="1">
    <citation type="journal article" date="2005" name="Nat. Genet.">
        <title>The complete genome sequence of Francisella tularensis, the causative agent of tularemia.</title>
        <authorList>
            <person name="Larsson P."/>
            <person name="Oyston P.C.F."/>
            <person name="Chain P."/>
            <person name="Chu M.C."/>
            <person name="Duffield M."/>
            <person name="Fuxelius H.-H."/>
            <person name="Garcia E."/>
            <person name="Haelltorp G."/>
            <person name="Johansson D."/>
            <person name="Isherwood K.E."/>
            <person name="Karp P.D."/>
            <person name="Larsson E."/>
            <person name="Liu Y."/>
            <person name="Michell S."/>
            <person name="Prior J."/>
            <person name="Prior R."/>
            <person name="Malfatti S."/>
            <person name="Sjoestedt A."/>
            <person name="Svensson K."/>
            <person name="Thompson N."/>
            <person name="Vergez L."/>
            <person name="Wagg J.K."/>
            <person name="Wren B.W."/>
            <person name="Lindler L.E."/>
            <person name="Andersson S.G.E."/>
            <person name="Forsman M."/>
            <person name="Titball R.W."/>
        </authorList>
    </citation>
    <scope>NUCLEOTIDE SEQUENCE [LARGE SCALE GENOMIC DNA]</scope>
    <source>
        <strain>SCHU S4 / Schu 4</strain>
    </source>
</reference>
<gene>
    <name evidence="1" type="primary">fabZ</name>
    <name type="ordered locus">FTT_1570c</name>
</gene>
<evidence type="ECO:0000255" key="1">
    <source>
        <dbReference type="HAMAP-Rule" id="MF_00406"/>
    </source>
</evidence>
<evidence type="ECO:0007829" key="2">
    <source>
        <dbReference type="PDB" id="5BUY"/>
    </source>
</evidence>
<feature type="chain" id="PRO_0000091679" description="3-hydroxyacyl-[acyl-carrier-protein] dehydratase FabZ">
    <location>
        <begin position="1"/>
        <end position="163"/>
    </location>
</feature>
<feature type="active site" evidence="1">
    <location>
        <position position="58"/>
    </location>
</feature>
<feature type="helix" evidence="2">
    <location>
        <begin position="13"/>
        <end position="19"/>
    </location>
</feature>
<feature type="strand" evidence="2">
    <location>
        <begin position="31"/>
        <end position="36"/>
    </location>
</feature>
<feature type="turn" evidence="2">
    <location>
        <begin position="37"/>
        <end position="40"/>
    </location>
</feature>
<feature type="strand" evidence="2">
    <location>
        <begin position="41"/>
        <end position="47"/>
    </location>
</feature>
<feature type="strand" evidence="2">
    <location>
        <begin position="50"/>
        <end position="52"/>
    </location>
</feature>
<feature type="helix" evidence="2">
    <location>
        <begin position="53"/>
        <end position="56"/>
    </location>
</feature>
<feature type="helix" evidence="2">
    <location>
        <begin position="67"/>
        <end position="84"/>
    </location>
</feature>
<feature type="helix" evidence="2">
    <location>
        <begin position="86"/>
        <end position="89"/>
    </location>
</feature>
<feature type="turn" evidence="2">
    <location>
        <begin position="90"/>
        <end position="92"/>
    </location>
</feature>
<feature type="strand" evidence="2">
    <location>
        <begin position="105"/>
        <end position="109"/>
    </location>
</feature>
<feature type="strand" evidence="2">
    <location>
        <begin position="112"/>
        <end position="114"/>
    </location>
</feature>
<feature type="strand" evidence="2">
    <location>
        <begin position="123"/>
        <end position="134"/>
    </location>
</feature>
<feature type="strand" evidence="2">
    <location>
        <begin position="137"/>
        <end position="146"/>
    </location>
</feature>
<feature type="strand" evidence="2">
    <location>
        <begin position="149"/>
        <end position="159"/>
    </location>
</feature>
<organism>
    <name type="scientific">Francisella tularensis subsp. tularensis (strain SCHU S4 / Schu 4)</name>
    <dbReference type="NCBI Taxonomy" id="177416"/>
    <lineage>
        <taxon>Bacteria</taxon>
        <taxon>Pseudomonadati</taxon>
        <taxon>Pseudomonadota</taxon>
        <taxon>Gammaproteobacteria</taxon>
        <taxon>Thiotrichales</taxon>
        <taxon>Francisellaceae</taxon>
        <taxon>Francisella</taxon>
    </lineage>
</organism>
<sequence>MSQFNQNNKQIDVMGIRKILPHRYPFALLDKIVDWSVEDRTIVAQKNVTINEDFFNGHFPDFPVMPGVLIVEAMAQATAILGELMAETLFAHVVEKAGGGRRTFMLAGIDKVRVKRPVVPGDVLVIESRMVKQKNIICTAESVAKVDGQIVCSAELMAAYKDY</sequence>
<comment type="function">
    <text evidence="1">Involved in unsaturated fatty acids biosynthesis. Catalyzes the dehydration of short chain beta-hydroxyacyl-ACPs and long chain saturated and unsaturated beta-hydroxyacyl-ACPs.</text>
</comment>
<comment type="catalytic activity">
    <reaction evidence="1">
        <text>a (3R)-hydroxyacyl-[ACP] = a (2E)-enoyl-[ACP] + H2O</text>
        <dbReference type="Rhea" id="RHEA:13097"/>
        <dbReference type="Rhea" id="RHEA-COMP:9925"/>
        <dbReference type="Rhea" id="RHEA-COMP:9945"/>
        <dbReference type="ChEBI" id="CHEBI:15377"/>
        <dbReference type="ChEBI" id="CHEBI:78784"/>
        <dbReference type="ChEBI" id="CHEBI:78827"/>
        <dbReference type="EC" id="4.2.1.59"/>
    </reaction>
</comment>
<comment type="subcellular location">
    <subcellularLocation>
        <location evidence="1">Cytoplasm</location>
    </subcellularLocation>
</comment>
<comment type="similarity">
    <text evidence="1">Belongs to the thioester dehydratase family. FabZ subfamily.</text>
</comment>
<accession>Q5NEQ0</accession>
<keyword id="KW-0002">3D-structure</keyword>
<keyword id="KW-0963">Cytoplasm</keyword>
<keyword id="KW-0441">Lipid A biosynthesis</keyword>
<keyword id="KW-0444">Lipid biosynthesis</keyword>
<keyword id="KW-0443">Lipid metabolism</keyword>
<keyword id="KW-0456">Lyase</keyword>
<keyword id="KW-1185">Reference proteome</keyword>
<name>FABZ_FRATT</name>